<comment type="function">
    <text evidence="1">Protein phosphatase that regulates many processes such as microtubule organization at centrosomes.</text>
</comment>
<comment type="catalytic activity">
    <reaction>
        <text>O-phospho-L-seryl-[protein] + H2O = L-seryl-[protein] + phosphate</text>
        <dbReference type="Rhea" id="RHEA:20629"/>
        <dbReference type="Rhea" id="RHEA-COMP:9863"/>
        <dbReference type="Rhea" id="RHEA-COMP:11604"/>
        <dbReference type="ChEBI" id="CHEBI:15377"/>
        <dbReference type="ChEBI" id="CHEBI:29999"/>
        <dbReference type="ChEBI" id="CHEBI:43474"/>
        <dbReference type="ChEBI" id="CHEBI:83421"/>
        <dbReference type="EC" id="3.1.3.16"/>
    </reaction>
</comment>
<comment type="catalytic activity">
    <reaction>
        <text>O-phospho-L-threonyl-[protein] + H2O = L-threonyl-[protein] + phosphate</text>
        <dbReference type="Rhea" id="RHEA:47004"/>
        <dbReference type="Rhea" id="RHEA-COMP:11060"/>
        <dbReference type="Rhea" id="RHEA-COMP:11605"/>
        <dbReference type="ChEBI" id="CHEBI:15377"/>
        <dbReference type="ChEBI" id="CHEBI:30013"/>
        <dbReference type="ChEBI" id="CHEBI:43474"/>
        <dbReference type="ChEBI" id="CHEBI:61977"/>
        <dbReference type="EC" id="3.1.3.16"/>
    </reaction>
</comment>
<comment type="cofactor">
    <cofactor evidence="1">
        <name>Mn(2+)</name>
        <dbReference type="ChEBI" id="CHEBI:29035"/>
    </cofactor>
    <text evidence="1">Binds 2 manganese ions per subunit.</text>
</comment>
<comment type="subunit">
    <text evidence="1">Serine/threonine-protein phosphatase 4 (PP4) occurs in different assemblies of the catalytic and one or more regulatory subunits.</text>
</comment>
<comment type="subcellular location">
    <subcellularLocation>
        <location evidence="1">Cytoplasm</location>
    </subcellularLocation>
    <subcellularLocation>
        <location evidence="1">Cytoplasm</location>
        <location evidence="1">Cytoskeleton</location>
        <location evidence="1">Microtubule organizing center</location>
        <location evidence="1">Centrosome</location>
    </subcellularLocation>
</comment>
<comment type="similarity">
    <text evidence="2">Belongs to the PPP phosphatase family. PP-4 (PP-X) subfamily.</text>
</comment>
<name>PP4CB_DANRE</name>
<sequence length="307" mass="35097">MGDMSDLDRQIDQLRRCELIKENEVKALCAKAREILVEESNVQRVDSPVTVCGDIHGQFYDLKELFRVGGDVPETNYLFMGDFVDRGFYSVETFLLLLALKVRYPDRITLIRGNHESRQITQVYGFYDECLRKYGSVTVWRYCTEIFDYLSLSAIIDGKIFCVHGGLSPSIQTLDQIRTIDRKQEVPHDGPMCDLLWSDPEDTTGWGVSPRGAGYLFGSDVVAQFNAANDIDMICRAHQLVMEGYKWHFNETVLTVWSAPNYCYRCGNVAAILELDEHLQKEFIIFEAAPQETRGIPSKKPVADYFL</sequence>
<dbReference type="EC" id="3.1.3.16"/>
<dbReference type="EMBL" id="BC155609">
    <property type="protein sequence ID" value="AAI55610.1"/>
    <property type="molecule type" value="mRNA"/>
</dbReference>
<dbReference type="RefSeq" id="NP_001104638.1">
    <property type="nucleotide sequence ID" value="NM_001111168.1"/>
</dbReference>
<dbReference type="RefSeq" id="XP_009304674.1">
    <property type="nucleotide sequence ID" value="XM_009306399.2"/>
</dbReference>
<dbReference type="SMR" id="A9JRC7"/>
<dbReference type="FunCoup" id="A9JRC7">
    <property type="interactions" value="2083"/>
</dbReference>
<dbReference type="STRING" id="7955.ENSDARP00000103385"/>
<dbReference type="PaxDb" id="7955-ENSDARP00000103385"/>
<dbReference type="PeptideAtlas" id="A9JRC7"/>
<dbReference type="Ensembl" id="ENSDART00000114857">
    <property type="protein sequence ID" value="ENSDARP00000103385"/>
    <property type="gene ID" value="ENSDARG00000076439"/>
</dbReference>
<dbReference type="GeneID" id="562705"/>
<dbReference type="KEGG" id="dre:562705"/>
<dbReference type="AGR" id="ZFIN:ZDB-GENE-080219-32"/>
<dbReference type="CTD" id="562705"/>
<dbReference type="ZFIN" id="ZDB-GENE-080219-32">
    <property type="gene designation" value="ppp4cb"/>
</dbReference>
<dbReference type="eggNOG" id="KOG0372">
    <property type="taxonomic scope" value="Eukaryota"/>
</dbReference>
<dbReference type="HOGENOM" id="CLU_004962_8_1_1"/>
<dbReference type="InParanoid" id="A9JRC7"/>
<dbReference type="OMA" id="QSTMPID"/>
<dbReference type="OrthoDB" id="1930084at2759"/>
<dbReference type="PhylomeDB" id="A9JRC7"/>
<dbReference type="TreeFam" id="TF105559"/>
<dbReference type="Reactome" id="R-DRE-5693607">
    <property type="pathway name" value="Processing of DNA double-strand break ends"/>
</dbReference>
<dbReference type="PRO" id="PR:A9JRC7"/>
<dbReference type="Proteomes" id="UP000000437">
    <property type="component" value="Chromosome 12"/>
</dbReference>
<dbReference type="Bgee" id="ENSDARG00000076439">
    <property type="expression patterns" value="Expressed in mature ovarian follicle and 23 other cell types or tissues"/>
</dbReference>
<dbReference type="ExpressionAtlas" id="A9JRC7">
    <property type="expression patterns" value="baseline"/>
</dbReference>
<dbReference type="GO" id="GO:0005813">
    <property type="term" value="C:centrosome"/>
    <property type="evidence" value="ECO:0007669"/>
    <property type="project" value="UniProtKB-SubCell"/>
</dbReference>
<dbReference type="GO" id="GO:0005737">
    <property type="term" value="C:cytoplasm"/>
    <property type="evidence" value="ECO:0000318"/>
    <property type="project" value="GO_Central"/>
</dbReference>
<dbReference type="GO" id="GO:0005634">
    <property type="term" value="C:nucleus"/>
    <property type="evidence" value="ECO:0000318"/>
    <property type="project" value="GO_Central"/>
</dbReference>
<dbReference type="GO" id="GO:0046872">
    <property type="term" value="F:metal ion binding"/>
    <property type="evidence" value="ECO:0007669"/>
    <property type="project" value="UniProtKB-KW"/>
</dbReference>
<dbReference type="GO" id="GO:0004722">
    <property type="term" value="F:protein serine/threonine phosphatase activity"/>
    <property type="evidence" value="ECO:0000318"/>
    <property type="project" value="GO_Central"/>
</dbReference>
<dbReference type="GO" id="GO:0048264">
    <property type="term" value="P:determination of ventral identity"/>
    <property type="evidence" value="ECO:0000315"/>
    <property type="project" value="ZFIN"/>
</dbReference>
<dbReference type="GO" id="GO:0009953">
    <property type="term" value="P:dorsal/ventral pattern formation"/>
    <property type="evidence" value="ECO:0000315"/>
    <property type="project" value="ZFIN"/>
</dbReference>
<dbReference type="GO" id="GO:0000724">
    <property type="term" value="P:double-strand break repair via homologous recombination"/>
    <property type="evidence" value="ECO:0000318"/>
    <property type="project" value="GO_Central"/>
</dbReference>
<dbReference type="GO" id="GO:0030513">
    <property type="term" value="P:positive regulation of BMP signaling pathway"/>
    <property type="evidence" value="ECO:0000315"/>
    <property type="project" value="ZFIN"/>
</dbReference>
<dbReference type="CDD" id="cd07415">
    <property type="entry name" value="MPP_PP2A_PP4_PP6"/>
    <property type="match status" value="1"/>
</dbReference>
<dbReference type="FunFam" id="3.60.21.10:FF:000010">
    <property type="entry name" value="Serine/threonine-protein phosphatase"/>
    <property type="match status" value="1"/>
</dbReference>
<dbReference type="Gene3D" id="3.60.21.10">
    <property type="match status" value="1"/>
</dbReference>
<dbReference type="InterPro" id="IPR004843">
    <property type="entry name" value="Calcineurin-like_PHP_ApaH"/>
</dbReference>
<dbReference type="InterPro" id="IPR029052">
    <property type="entry name" value="Metallo-depent_PP-like"/>
</dbReference>
<dbReference type="InterPro" id="IPR047129">
    <property type="entry name" value="PPA2-like"/>
</dbReference>
<dbReference type="InterPro" id="IPR006186">
    <property type="entry name" value="Ser/Thr-sp_prot-phosphatase"/>
</dbReference>
<dbReference type="PANTHER" id="PTHR45619">
    <property type="entry name" value="SERINE/THREONINE-PROTEIN PHOSPHATASE PP2A-RELATED"/>
    <property type="match status" value="1"/>
</dbReference>
<dbReference type="Pfam" id="PF00149">
    <property type="entry name" value="Metallophos"/>
    <property type="match status" value="1"/>
</dbReference>
<dbReference type="PRINTS" id="PR00114">
    <property type="entry name" value="STPHPHTASE"/>
</dbReference>
<dbReference type="SMART" id="SM00156">
    <property type="entry name" value="PP2Ac"/>
    <property type="match status" value="1"/>
</dbReference>
<dbReference type="SUPFAM" id="SSF56300">
    <property type="entry name" value="Metallo-dependent phosphatases"/>
    <property type="match status" value="1"/>
</dbReference>
<dbReference type="PROSITE" id="PS00125">
    <property type="entry name" value="SER_THR_PHOSPHATASE"/>
    <property type="match status" value="1"/>
</dbReference>
<accession>A9JRC7</accession>
<evidence type="ECO:0000250" key="1"/>
<evidence type="ECO:0000305" key="2"/>
<keyword id="KW-0963">Cytoplasm</keyword>
<keyword id="KW-0206">Cytoskeleton</keyword>
<keyword id="KW-0378">Hydrolase</keyword>
<keyword id="KW-0464">Manganese</keyword>
<keyword id="KW-0479">Metal-binding</keyword>
<keyword id="KW-0488">Methylation</keyword>
<keyword id="KW-0904">Protein phosphatase</keyword>
<keyword id="KW-1185">Reference proteome</keyword>
<reference key="1">
    <citation type="submission" date="2007-12" db="EMBL/GenBank/DDBJ databases">
        <authorList>
            <consortium name="NIH - Zebrafish Gene Collection (ZGC) project"/>
        </authorList>
    </citation>
    <scope>NUCLEOTIDE SEQUENCE [LARGE SCALE MRNA]</scope>
</reference>
<proteinExistence type="evidence at transcript level"/>
<organism>
    <name type="scientific">Danio rerio</name>
    <name type="common">Zebrafish</name>
    <name type="synonym">Brachydanio rerio</name>
    <dbReference type="NCBI Taxonomy" id="7955"/>
    <lineage>
        <taxon>Eukaryota</taxon>
        <taxon>Metazoa</taxon>
        <taxon>Chordata</taxon>
        <taxon>Craniata</taxon>
        <taxon>Vertebrata</taxon>
        <taxon>Euteleostomi</taxon>
        <taxon>Actinopterygii</taxon>
        <taxon>Neopterygii</taxon>
        <taxon>Teleostei</taxon>
        <taxon>Ostariophysi</taxon>
        <taxon>Cypriniformes</taxon>
        <taxon>Danionidae</taxon>
        <taxon>Danioninae</taxon>
        <taxon>Danio</taxon>
    </lineage>
</organism>
<gene>
    <name type="primary">ppp4cb</name>
    <name type="ORF">zgc:172126</name>
</gene>
<protein>
    <recommendedName>
        <fullName>Serine/threonine-protein phosphatase 4 catalytic subunit B</fullName>
        <shortName>PP4C-B</shortName>
        <ecNumber>3.1.3.16</ecNumber>
    </recommendedName>
</protein>
<feature type="chain" id="PRO_0000353207" description="Serine/threonine-protein phosphatase 4 catalytic subunit B">
    <location>
        <begin position="1"/>
        <end position="307"/>
    </location>
</feature>
<feature type="active site" description="Proton donor" evidence="1">
    <location>
        <position position="115"/>
    </location>
</feature>
<feature type="binding site" evidence="1">
    <location>
        <position position="54"/>
    </location>
    <ligand>
        <name>Mn(2+)</name>
        <dbReference type="ChEBI" id="CHEBI:29035"/>
        <label>1</label>
    </ligand>
</feature>
<feature type="binding site" evidence="1">
    <location>
        <position position="56"/>
    </location>
    <ligand>
        <name>Mn(2+)</name>
        <dbReference type="ChEBI" id="CHEBI:29035"/>
        <label>1</label>
    </ligand>
</feature>
<feature type="binding site" evidence="1">
    <location>
        <position position="82"/>
    </location>
    <ligand>
        <name>Mn(2+)</name>
        <dbReference type="ChEBI" id="CHEBI:29035"/>
        <label>1</label>
    </ligand>
</feature>
<feature type="binding site" evidence="1">
    <location>
        <position position="82"/>
    </location>
    <ligand>
        <name>Mn(2+)</name>
        <dbReference type="ChEBI" id="CHEBI:29035"/>
        <label>2</label>
    </ligand>
</feature>
<feature type="binding site" evidence="1">
    <location>
        <position position="114"/>
    </location>
    <ligand>
        <name>Mn(2+)</name>
        <dbReference type="ChEBI" id="CHEBI:29035"/>
        <label>2</label>
    </ligand>
</feature>
<feature type="binding site" evidence="1">
    <location>
        <position position="164"/>
    </location>
    <ligand>
        <name>Mn(2+)</name>
        <dbReference type="ChEBI" id="CHEBI:29035"/>
        <label>2</label>
    </ligand>
</feature>
<feature type="binding site" evidence="1">
    <location>
        <position position="238"/>
    </location>
    <ligand>
        <name>Mn(2+)</name>
        <dbReference type="ChEBI" id="CHEBI:29035"/>
        <label>2</label>
    </ligand>
</feature>
<feature type="modified residue" description="Leucine methyl ester" evidence="1">
    <location>
        <position position="307"/>
    </location>
</feature>